<reference key="1">
    <citation type="submission" date="2008-08" db="EMBL/GenBank/DDBJ databases">
        <title>The complete genome sequence of Thermodesulfovibrio yellowstonii strain ATCC 51303 / DSM 11347 / YP87.</title>
        <authorList>
            <person name="Dodson R.J."/>
            <person name="Durkin A.S."/>
            <person name="Wu M."/>
            <person name="Eisen J."/>
            <person name="Sutton G."/>
        </authorList>
    </citation>
    <scope>NUCLEOTIDE SEQUENCE [LARGE SCALE GENOMIC DNA]</scope>
    <source>
        <strain>ATCC 51303 / DSM 11347 / YP87</strain>
    </source>
</reference>
<dbReference type="EMBL" id="CP001147">
    <property type="protein sequence ID" value="ACI20819.1"/>
    <property type="molecule type" value="Genomic_DNA"/>
</dbReference>
<dbReference type="RefSeq" id="WP_012545550.1">
    <property type="nucleotide sequence ID" value="NC_011296.1"/>
</dbReference>
<dbReference type="RefSeq" id="YP_002249235.1">
    <property type="nucleotide sequence ID" value="NC_011296.1"/>
</dbReference>
<dbReference type="SMR" id="B5YG37"/>
<dbReference type="FunCoup" id="B5YG37">
    <property type="interactions" value="483"/>
</dbReference>
<dbReference type="STRING" id="289376.THEYE_A1436"/>
<dbReference type="EnsemblBacteria" id="ACI20819">
    <property type="protein sequence ID" value="ACI20819"/>
    <property type="gene ID" value="THEYE_A1436"/>
</dbReference>
<dbReference type="KEGG" id="tye:THEYE_A1436"/>
<dbReference type="PATRIC" id="fig|289376.4.peg.1397"/>
<dbReference type="eggNOG" id="COG0093">
    <property type="taxonomic scope" value="Bacteria"/>
</dbReference>
<dbReference type="HOGENOM" id="CLU_095071_2_1_0"/>
<dbReference type="InParanoid" id="B5YG37"/>
<dbReference type="OrthoDB" id="9806379at2"/>
<dbReference type="Proteomes" id="UP000000718">
    <property type="component" value="Chromosome"/>
</dbReference>
<dbReference type="GO" id="GO:0022625">
    <property type="term" value="C:cytosolic large ribosomal subunit"/>
    <property type="evidence" value="ECO:0000318"/>
    <property type="project" value="GO_Central"/>
</dbReference>
<dbReference type="GO" id="GO:0070180">
    <property type="term" value="F:large ribosomal subunit rRNA binding"/>
    <property type="evidence" value="ECO:0000318"/>
    <property type="project" value="GO_Central"/>
</dbReference>
<dbReference type="GO" id="GO:0003735">
    <property type="term" value="F:structural constituent of ribosome"/>
    <property type="evidence" value="ECO:0000318"/>
    <property type="project" value="GO_Central"/>
</dbReference>
<dbReference type="GO" id="GO:0006412">
    <property type="term" value="P:translation"/>
    <property type="evidence" value="ECO:0007669"/>
    <property type="project" value="UniProtKB-UniRule"/>
</dbReference>
<dbReference type="CDD" id="cd00337">
    <property type="entry name" value="Ribosomal_uL14"/>
    <property type="match status" value="1"/>
</dbReference>
<dbReference type="FunFam" id="2.40.150.20:FF:000001">
    <property type="entry name" value="50S ribosomal protein L14"/>
    <property type="match status" value="1"/>
</dbReference>
<dbReference type="Gene3D" id="2.40.150.20">
    <property type="entry name" value="Ribosomal protein L14"/>
    <property type="match status" value="1"/>
</dbReference>
<dbReference type="HAMAP" id="MF_01367">
    <property type="entry name" value="Ribosomal_uL14"/>
    <property type="match status" value="1"/>
</dbReference>
<dbReference type="InterPro" id="IPR000218">
    <property type="entry name" value="Ribosomal_uL14"/>
</dbReference>
<dbReference type="InterPro" id="IPR005745">
    <property type="entry name" value="Ribosomal_uL14_bac-type"/>
</dbReference>
<dbReference type="InterPro" id="IPR019972">
    <property type="entry name" value="Ribosomal_uL14_CS"/>
</dbReference>
<dbReference type="InterPro" id="IPR036853">
    <property type="entry name" value="Ribosomal_uL14_sf"/>
</dbReference>
<dbReference type="NCBIfam" id="TIGR01067">
    <property type="entry name" value="rplN_bact"/>
    <property type="match status" value="1"/>
</dbReference>
<dbReference type="PANTHER" id="PTHR11761">
    <property type="entry name" value="50S/60S RIBOSOMAL PROTEIN L14/L23"/>
    <property type="match status" value="1"/>
</dbReference>
<dbReference type="PANTHER" id="PTHR11761:SF3">
    <property type="entry name" value="LARGE RIBOSOMAL SUBUNIT PROTEIN UL14M"/>
    <property type="match status" value="1"/>
</dbReference>
<dbReference type="Pfam" id="PF00238">
    <property type="entry name" value="Ribosomal_L14"/>
    <property type="match status" value="1"/>
</dbReference>
<dbReference type="SMART" id="SM01374">
    <property type="entry name" value="Ribosomal_L14"/>
    <property type="match status" value="1"/>
</dbReference>
<dbReference type="SUPFAM" id="SSF50193">
    <property type="entry name" value="Ribosomal protein L14"/>
    <property type="match status" value="1"/>
</dbReference>
<dbReference type="PROSITE" id="PS00049">
    <property type="entry name" value="RIBOSOMAL_L14"/>
    <property type="match status" value="1"/>
</dbReference>
<feature type="chain" id="PRO_1000144345" description="Large ribosomal subunit protein uL14">
    <location>
        <begin position="1"/>
        <end position="122"/>
    </location>
</feature>
<evidence type="ECO:0000255" key="1">
    <source>
        <dbReference type="HAMAP-Rule" id="MF_01367"/>
    </source>
</evidence>
<evidence type="ECO:0000305" key="2"/>
<gene>
    <name evidence="1" type="primary">rplN</name>
    <name type="ordered locus">THEYE_A1436</name>
</gene>
<name>RL14_THEYD</name>
<proteinExistence type="inferred from homology"/>
<comment type="function">
    <text evidence="1">Binds to 23S rRNA. Forms part of two intersubunit bridges in the 70S ribosome.</text>
</comment>
<comment type="subunit">
    <text evidence="1">Part of the 50S ribosomal subunit. Forms a cluster with proteins L3 and L19. In the 70S ribosome, L14 and L19 interact and together make contacts with the 16S rRNA in bridges B5 and B8.</text>
</comment>
<comment type="similarity">
    <text evidence="1">Belongs to the universal ribosomal protein uL14 family.</text>
</comment>
<accession>B5YG37</accession>
<protein>
    <recommendedName>
        <fullName evidence="1">Large ribosomal subunit protein uL14</fullName>
    </recommendedName>
    <alternativeName>
        <fullName evidence="2">50S ribosomal protein L14</fullName>
    </alternativeName>
</protein>
<keyword id="KW-1185">Reference proteome</keyword>
<keyword id="KW-0687">Ribonucleoprotein</keyword>
<keyword id="KW-0689">Ribosomal protein</keyword>
<keyword id="KW-0694">RNA-binding</keyword>
<keyword id="KW-0699">rRNA-binding</keyword>
<sequence length="122" mass="13541">MIQPRSILEVADNSGAKRVQCIRVLGGSNRKYASLGDVIIVSVKEALPDSNIKKGSVAKAVIVRLRRSVRRNDGSYIRFDQNAVVLVNNQLEPIGTRIFGPVARELRWKEFTKIVSLAPEVI</sequence>
<organism>
    <name type="scientific">Thermodesulfovibrio yellowstonii (strain ATCC 51303 / DSM 11347 / YP87)</name>
    <dbReference type="NCBI Taxonomy" id="289376"/>
    <lineage>
        <taxon>Bacteria</taxon>
        <taxon>Pseudomonadati</taxon>
        <taxon>Nitrospirota</taxon>
        <taxon>Thermodesulfovibrionia</taxon>
        <taxon>Thermodesulfovibrionales</taxon>
        <taxon>Thermodesulfovibrionaceae</taxon>
        <taxon>Thermodesulfovibrio</taxon>
    </lineage>
</organism>